<keyword id="KW-0963">Cytoplasm</keyword>
<keyword id="KW-0539">Nucleus</keyword>
<keyword id="KW-1185">Reference proteome</keyword>
<reference key="1">
    <citation type="journal article" date="2005" name="Science">
        <title>The transcriptional landscape of the mammalian genome.</title>
        <authorList>
            <person name="Carninci P."/>
            <person name="Kasukawa T."/>
            <person name="Katayama S."/>
            <person name="Gough J."/>
            <person name="Frith M.C."/>
            <person name="Maeda N."/>
            <person name="Oyama R."/>
            <person name="Ravasi T."/>
            <person name="Lenhard B."/>
            <person name="Wells C."/>
            <person name="Kodzius R."/>
            <person name="Shimokawa K."/>
            <person name="Bajic V.B."/>
            <person name="Brenner S.E."/>
            <person name="Batalov S."/>
            <person name="Forrest A.R."/>
            <person name="Zavolan M."/>
            <person name="Davis M.J."/>
            <person name="Wilming L.G."/>
            <person name="Aidinis V."/>
            <person name="Allen J.E."/>
            <person name="Ambesi-Impiombato A."/>
            <person name="Apweiler R."/>
            <person name="Aturaliya R.N."/>
            <person name="Bailey T.L."/>
            <person name="Bansal M."/>
            <person name="Baxter L."/>
            <person name="Beisel K.W."/>
            <person name="Bersano T."/>
            <person name="Bono H."/>
            <person name="Chalk A.M."/>
            <person name="Chiu K.P."/>
            <person name="Choudhary V."/>
            <person name="Christoffels A."/>
            <person name="Clutterbuck D.R."/>
            <person name="Crowe M.L."/>
            <person name="Dalla E."/>
            <person name="Dalrymple B.P."/>
            <person name="de Bono B."/>
            <person name="Della Gatta G."/>
            <person name="di Bernardo D."/>
            <person name="Down T."/>
            <person name="Engstrom P."/>
            <person name="Fagiolini M."/>
            <person name="Faulkner G."/>
            <person name="Fletcher C.F."/>
            <person name="Fukushima T."/>
            <person name="Furuno M."/>
            <person name="Futaki S."/>
            <person name="Gariboldi M."/>
            <person name="Georgii-Hemming P."/>
            <person name="Gingeras T.R."/>
            <person name="Gojobori T."/>
            <person name="Green R.E."/>
            <person name="Gustincich S."/>
            <person name="Harbers M."/>
            <person name="Hayashi Y."/>
            <person name="Hensch T.K."/>
            <person name="Hirokawa N."/>
            <person name="Hill D."/>
            <person name="Huminiecki L."/>
            <person name="Iacono M."/>
            <person name="Ikeo K."/>
            <person name="Iwama A."/>
            <person name="Ishikawa T."/>
            <person name="Jakt M."/>
            <person name="Kanapin A."/>
            <person name="Katoh M."/>
            <person name="Kawasawa Y."/>
            <person name="Kelso J."/>
            <person name="Kitamura H."/>
            <person name="Kitano H."/>
            <person name="Kollias G."/>
            <person name="Krishnan S.P."/>
            <person name="Kruger A."/>
            <person name="Kummerfeld S.K."/>
            <person name="Kurochkin I.V."/>
            <person name="Lareau L.F."/>
            <person name="Lazarevic D."/>
            <person name="Lipovich L."/>
            <person name="Liu J."/>
            <person name="Liuni S."/>
            <person name="McWilliam S."/>
            <person name="Madan Babu M."/>
            <person name="Madera M."/>
            <person name="Marchionni L."/>
            <person name="Matsuda H."/>
            <person name="Matsuzawa S."/>
            <person name="Miki H."/>
            <person name="Mignone F."/>
            <person name="Miyake S."/>
            <person name="Morris K."/>
            <person name="Mottagui-Tabar S."/>
            <person name="Mulder N."/>
            <person name="Nakano N."/>
            <person name="Nakauchi H."/>
            <person name="Ng P."/>
            <person name="Nilsson R."/>
            <person name="Nishiguchi S."/>
            <person name="Nishikawa S."/>
            <person name="Nori F."/>
            <person name="Ohara O."/>
            <person name="Okazaki Y."/>
            <person name="Orlando V."/>
            <person name="Pang K.C."/>
            <person name="Pavan W.J."/>
            <person name="Pavesi G."/>
            <person name="Pesole G."/>
            <person name="Petrovsky N."/>
            <person name="Piazza S."/>
            <person name="Reed J."/>
            <person name="Reid J.F."/>
            <person name="Ring B.Z."/>
            <person name="Ringwald M."/>
            <person name="Rost B."/>
            <person name="Ruan Y."/>
            <person name="Salzberg S.L."/>
            <person name="Sandelin A."/>
            <person name="Schneider C."/>
            <person name="Schoenbach C."/>
            <person name="Sekiguchi K."/>
            <person name="Semple C.A."/>
            <person name="Seno S."/>
            <person name="Sessa L."/>
            <person name="Sheng Y."/>
            <person name="Shibata Y."/>
            <person name="Shimada H."/>
            <person name="Shimada K."/>
            <person name="Silva D."/>
            <person name="Sinclair B."/>
            <person name="Sperling S."/>
            <person name="Stupka E."/>
            <person name="Sugiura K."/>
            <person name="Sultana R."/>
            <person name="Takenaka Y."/>
            <person name="Taki K."/>
            <person name="Tammoja K."/>
            <person name="Tan S.L."/>
            <person name="Tang S."/>
            <person name="Taylor M.S."/>
            <person name="Tegner J."/>
            <person name="Teichmann S.A."/>
            <person name="Ueda H.R."/>
            <person name="van Nimwegen E."/>
            <person name="Verardo R."/>
            <person name="Wei C.L."/>
            <person name="Yagi K."/>
            <person name="Yamanishi H."/>
            <person name="Zabarovsky E."/>
            <person name="Zhu S."/>
            <person name="Zimmer A."/>
            <person name="Hide W."/>
            <person name="Bult C."/>
            <person name="Grimmond S.M."/>
            <person name="Teasdale R.D."/>
            <person name="Liu E.T."/>
            <person name="Brusic V."/>
            <person name="Quackenbush J."/>
            <person name="Wahlestedt C."/>
            <person name="Mattick J.S."/>
            <person name="Hume D.A."/>
            <person name="Kai C."/>
            <person name="Sasaki D."/>
            <person name="Tomaru Y."/>
            <person name="Fukuda S."/>
            <person name="Kanamori-Katayama M."/>
            <person name="Suzuki M."/>
            <person name="Aoki J."/>
            <person name="Arakawa T."/>
            <person name="Iida J."/>
            <person name="Imamura K."/>
            <person name="Itoh M."/>
            <person name="Kato T."/>
            <person name="Kawaji H."/>
            <person name="Kawagashira N."/>
            <person name="Kawashima T."/>
            <person name="Kojima M."/>
            <person name="Kondo S."/>
            <person name="Konno H."/>
            <person name="Nakano K."/>
            <person name="Ninomiya N."/>
            <person name="Nishio T."/>
            <person name="Okada M."/>
            <person name="Plessy C."/>
            <person name="Shibata K."/>
            <person name="Shiraki T."/>
            <person name="Suzuki S."/>
            <person name="Tagami M."/>
            <person name="Waki K."/>
            <person name="Watahiki A."/>
            <person name="Okamura-Oho Y."/>
            <person name="Suzuki H."/>
            <person name="Kawai J."/>
            <person name="Hayashizaki Y."/>
        </authorList>
    </citation>
    <scope>NUCLEOTIDE SEQUENCE [LARGE SCALE MRNA]</scope>
    <source>
        <strain>C57BL/6J</strain>
        <tissue>Kidney</tissue>
    </source>
</reference>
<reference key="2">
    <citation type="journal article" date="2004" name="Genome Res.">
        <title>The status, quality, and expansion of the NIH full-length cDNA project: the Mammalian Gene Collection (MGC).</title>
        <authorList>
            <consortium name="The MGC Project Team"/>
        </authorList>
    </citation>
    <scope>NUCLEOTIDE SEQUENCE [LARGE SCALE MRNA]</scope>
</reference>
<reference key="3">
    <citation type="journal article" date="2017" name="Hum. Mutat.">
        <title>Mutation in SSUH2 causes autosomal-dominant dentin dysplasia type I.</title>
        <authorList>
            <person name="Xiong F."/>
            <person name="Ji Z."/>
            <person name="Liu Y."/>
            <person name="Zhang Y."/>
            <person name="Hu L."/>
            <person name="Yang Q."/>
            <person name="Qiu Q."/>
            <person name="Zhao L."/>
            <person name="Chen D."/>
            <person name="Tian Z."/>
            <person name="Shang X."/>
            <person name="Zhang L."/>
            <person name="Wei X."/>
            <person name="Liu C."/>
            <person name="Yu Q."/>
            <person name="Zhang M."/>
            <person name="Cheng J."/>
            <person name="Xiong J."/>
            <person name="Li D."/>
            <person name="Wu X."/>
            <person name="Yuan H."/>
            <person name="Zhang W."/>
            <person name="Xu X."/>
        </authorList>
    </citation>
    <scope>FUNCTION</scope>
    <scope>TISSUE SPECIFICITY</scope>
    <scope>DEVELOPMENTAL STAGE</scope>
    <scope>MUTAGENESIS OF PRO-141</scope>
</reference>
<proteinExistence type="evidence at protein level"/>
<gene>
    <name evidence="5" type="primary">Ssuh2</name>
    <name type="synonym">Ssu2</name>
</gene>
<organism>
    <name type="scientific">Mus musculus</name>
    <name type="common">Mouse</name>
    <dbReference type="NCBI Taxonomy" id="10090"/>
    <lineage>
        <taxon>Eukaryota</taxon>
        <taxon>Metazoa</taxon>
        <taxon>Chordata</taxon>
        <taxon>Craniata</taxon>
        <taxon>Vertebrata</taxon>
        <taxon>Euteleostomi</taxon>
        <taxon>Mammalia</taxon>
        <taxon>Eutheria</taxon>
        <taxon>Euarchontoglires</taxon>
        <taxon>Glires</taxon>
        <taxon>Rodentia</taxon>
        <taxon>Myomorpha</taxon>
        <taxon>Muroidea</taxon>
        <taxon>Muridae</taxon>
        <taxon>Murinae</taxon>
        <taxon>Mus</taxon>
        <taxon>Mus</taxon>
    </lineage>
</organism>
<evidence type="ECO:0000250" key="1">
    <source>
        <dbReference type="UniProtKB" id="Q9Y2M2"/>
    </source>
</evidence>
<evidence type="ECO:0000256" key="2">
    <source>
        <dbReference type="SAM" id="MobiDB-lite"/>
    </source>
</evidence>
<evidence type="ECO:0000269" key="3">
    <source>
    </source>
</evidence>
<evidence type="ECO:0000305" key="4"/>
<evidence type="ECO:0000312" key="5">
    <source>
        <dbReference type="MGI" id="MGI:2443733"/>
    </source>
</evidence>
<dbReference type="EMBL" id="AK085578">
    <property type="protein sequence ID" value="BAC39477.1"/>
    <property type="molecule type" value="mRNA"/>
</dbReference>
<dbReference type="EMBL" id="BC116438">
    <property type="protein sequence ID" value="AAI16439.1"/>
    <property type="molecule type" value="mRNA"/>
</dbReference>
<dbReference type="EMBL" id="BC116439">
    <property type="protein sequence ID" value="AAI16440.1"/>
    <property type="molecule type" value="mRNA"/>
</dbReference>
<dbReference type="CCDS" id="CCDS20405.1"/>
<dbReference type="RefSeq" id="NP_780734.1">
    <property type="nucleotide sequence ID" value="NM_175525.3"/>
</dbReference>
<dbReference type="RefSeq" id="XP_006506173.2">
    <property type="nucleotide sequence ID" value="XM_006506110.3"/>
</dbReference>
<dbReference type="FunCoup" id="Q8C3L1">
    <property type="interactions" value="1319"/>
</dbReference>
<dbReference type="STRING" id="10090.ENSMUSP00000052328"/>
<dbReference type="iPTMnet" id="Q8C3L1"/>
<dbReference type="PhosphoSitePlus" id="Q8C3L1"/>
<dbReference type="PaxDb" id="10090-ENSMUSP00000052328"/>
<dbReference type="ProteomicsDB" id="257423"/>
<dbReference type="Antibodypedia" id="53444">
    <property type="antibodies" value="65 antibodies from 11 providers"/>
</dbReference>
<dbReference type="Ensembl" id="ENSMUST00000060847.6">
    <property type="protein sequence ID" value="ENSMUSP00000052328.6"/>
    <property type="gene ID" value="ENSMUSG00000034387.14"/>
</dbReference>
<dbReference type="GeneID" id="243612"/>
<dbReference type="KEGG" id="mmu:243612"/>
<dbReference type="UCSC" id="uc009ddx.1">
    <property type="organism name" value="mouse"/>
</dbReference>
<dbReference type="AGR" id="MGI:2443733"/>
<dbReference type="CTD" id="243612"/>
<dbReference type="MGI" id="MGI:2443733">
    <property type="gene designation" value="Ssu2"/>
</dbReference>
<dbReference type="VEuPathDB" id="HostDB:ENSMUSG00000034387"/>
<dbReference type="eggNOG" id="KOG2813">
    <property type="taxonomic scope" value="Eukaryota"/>
</dbReference>
<dbReference type="GeneTree" id="ENSGT00440000038003"/>
<dbReference type="HOGENOM" id="CLU_044550_2_0_1"/>
<dbReference type="InParanoid" id="Q8C3L1"/>
<dbReference type="OrthoDB" id="3355217at2759"/>
<dbReference type="PhylomeDB" id="Q8C3L1"/>
<dbReference type="TreeFam" id="TF320855"/>
<dbReference type="BioGRID-ORCS" id="243612">
    <property type="hits" value="0 hits in 76 CRISPR screens"/>
</dbReference>
<dbReference type="PRO" id="PR:Q8C3L1"/>
<dbReference type="Proteomes" id="UP000000589">
    <property type="component" value="Chromosome 6"/>
</dbReference>
<dbReference type="RNAct" id="Q8C3L1">
    <property type="molecule type" value="protein"/>
</dbReference>
<dbReference type="Bgee" id="ENSMUSG00000034387">
    <property type="expression patterns" value="Expressed in blastoderm cell in morula and 43 other cell types or tissues"/>
</dbReference>
<dbReference type="ExpressionAtlas" id="Q8C3L1">
    <property type="expression patterns" value="baseline and differential"/>
</dbReference>
<dbReference type="GO" id="GO:0005737">
    <property type="term" value="C:cytoplasm"/>
    <property type="evidence" value="ECO:0000250"/>
    <property type="project" value="UniProtKB"/>
</dbReference>
<dbReference type="GO" id="GO:0005634">
    <property type="term" value="C:nucleus"/>
    <property type="evidence" value="ECO:0000250"/>
    <property type="project" value="UniProtKB"/>
</dbReference>
<dbReference type="GO" id="GO:0031072">
    <property type="term" value="F:heat shock protein binding"/>
    <property type="evidence" value="ECO:0007669"/>
    <property type="project" value="InterPro"/>
</dbReference>
<dbReference type="GO" id="GO:0051082">
    <property type="term" value="F:unfolded protein binding"/>
    <property type="evidence" value="ECO:0007669"/>
    <property type="project" value="InterPro"/>
</dbReference>
<dbReference type="GO" id="GO:0042476">
    <property type="term" value="P:odontogenesis"/>
    <property type="evidence" value="ECO:0000315"/>
    <property type="project" value="UniProtKB"/>
</dbReference>
<dbReference type="CDD" id="cd10719">
    <property type="entry name" value="DnaJ_zf"/>
    <property type="match status" value="1"/>
</dbReference>
<dbReference type="InterPro" id="IPR001305">
    <property type="entry name" value="HSP_DnaJ_Cys-rich_dom"/>
</dbReference>
<dbReference type="InterPro" id="IPR036410">
    <property type="entry name" value="HSP_DnaJ_Cys-rich_dom_sf"/>
</dbReference>
<dbReference type="InterPro" id="IPR052789">
    <property type="entry name" value="SSUH2_homolog"/>
</dbReference>
<dbReference type="PANTHER" id="PTHR48465">
    <property type="entry name" value="PROTEIN SSUH2 HOMOLOG"/>
    <property type="match status" value="1"/>
</dbReference>
<dbReference type="PANTHER" id="PTHR48465:SF1">
    <property type="entry name" value="PROTEIN SSUH2 HOMOLOG"/>
    <property type="match status" value="1"/>
</dbReference>
<dbReference type="SUPFAM" id="SSF57938">
    <property type="entry name" value="DnaJ/Hsp40 cysteine-rich domain"/>
    <property type="match status" value="1"/>
</dbReference>
<feature type="chain" id="PRO_0000260083" description="Protein SSUH2 homolog">
    <location>
        <begin position="1"/>
        <end position="340"/>
    </location>
</feature>
<feature type="region of interest" description="Disordered" evidence="2">
    <location>
        <begin position="1"/>
        <end position="20"/>
    </location>
</feature>
<feature type="compositionally biased region" description="Acidic residues" evidence="2">
    <location>
        <begin position="1"/>
        <end position="11"/>
    </location>
</feature>
<feature type="mutagenesis site" description="Mice carrying this mutant show narrowed dental pulp cavities, increased dentin thickness, and abnormal tooth attrition, as well as anomalies in the number and organization of dentinal tubules, indicating dysplasia of the mineralized dentin; the width of the predentin zone is reduced in heterozygous animals or null in homozygotes, with significantly increased numbers of odontoblasts in the pulp cavity compared to wild-type mice." evidence="3">
    <original>P</original>
    <variation>Q</variation>
    <location>
        <position position="141"/>
    </location>
</feature>
<feature type="sequence conflict" description="In Ref. 2; AAI16439/AAI16440." evidence="4" ref="2">
    <location>
        <position position="70"/>
    </location>
</feature>
<protein>
    <recommendedName>
        <fullName evidence="4">Protein SSUH2 homolog</fullName>
    </recommendedName>
    <alternativeName>
        <fullName>Protein ssu-2 homolog</fullName>
    </alternativeName>
</protein>
<sequence length="340" mass="38544">MDRDPSEEDSMADLSFEAESPVLPPDELLEGLPSYDWLLQGRERQVFFPPLEALGRSQEPACWSSVLEHSRVPVVTEEVAREALLSFVNSHCCYSSAAAGNLIIQELRQQTLCRYRLETFSESRVSEWTFQPVTNHSVDGPQRGTSPRLWDMKVQVPPMFQEDTRKLQVPHSSLVKECHKCHGRGRYKCSGCHGAGMVRCSSCSGTKRKAKQPRRCHLCSGSGRRRCSTCSGRGNKTCATCKGERKLEHFVQLVIMWKNSLFEFMSPHHLHCPKELLAKARGENLFRDENATVYPIVDFPLQDISLASQRGIEEHSTMLASRARILQQMFFYSGGPFHHS</sequence>
<name>SSUH2_MOUSE</name>
<accession>Q8C3L1</accession>
<accession>Q14AZ1</accession>
<comment type="function">
    <text evidence="3">Plays a role in odontogenesis.</text>
</comment>
<comment type="subcellular location">
    <subcellularLocation>
        <location evidence="1">Cytoplasm</location>
    </subcellularLocation>
    <subcellularLocation>
        <location evidence="1">Nucleus</location>
    </subcellularLocation>
</comment>
<comment type="tissue specificity">
    <text evidence="3">Widely expressed, with highest levels in the liver, intestine, tongue and underjaw.</text>
</comment>
<comment type="developmental stage">
    <text evidence="3">In the developing brain, expressed at low levels prior to 15 dpc. Expression increases in the early postnatal stages, peaks at P16, and decreases in adulthood.</text>
</comment>